<sequence>MAGSIGERREDFKVLNLLGKGSFACVYRAQSINTGIDVAIKMIDKKAMQKVGMVQRVRNEVEIHCQLKHPSILELYNYFEDSNYVYLILEMCHNGEMNRFLKNRKKPFSEDEARHFMHQIVTGMLYLHSHGILHRDLTLSNLLLSSDMNIKIADFGLATQLKMPNEKHFTMCGTPNYIAPEIATRSAHGLESDVWSLGCMLYTFLVGRPPFDTDTVKNTLNKIVLADYEMPDFVSREAKDLIFQLLRKNPADRLSLSSVLDHAFMTGFSNVQSKVMGAVEDSIDSGHATISTGFTGSSGVSISGRFQEKRILSGPSLPNKVNIFQFKDKHPAERSNGGSFHNTQRENNDFSEGNGRKTVACEDRPHSRYLRRAHSSDRSGTSQSQTYGKPSSFSERCHSVEMLAKPSNLKGYCTSSPPKSYGDIPQMFTDERSLERHTSPPVKEKTPSEFMCPAKQITPRSGDKCQAETVQQWFGAMQLNGKFKNTPDTSSVSNMGGDFYSQQTMQNGAPQYAWNDVKRKKDTDSSVESVLRGISKLPSGQHKAEKSQFGEQSKARVPQQAFGSSTLRSIISPLNAERLKPIRQKTKNAVVSILETGEVCMEFLKEQNSQERVKEVLRISCDGNLIYVYHPNEGKGFPLVERPPSPPENMRSYTFDSLPEKYWKKYQYAAKFIQLVRSKMPKVTYYTRYAKCMLMENGPNADFEVCFYDGAKIHKTPDLIRVIEKSGKSYTVEGSRLSTLSDQVRSYVNHANESHCVCLSLESAINTEEKKGENISLFPITFGRRPAITESPRTQLTVDSARERKDEQSSANRVLHSSATSPPQIPNINPSLISYEGSVFSATTAQPSPPTSNTLKTHAPDRAQVLKSVFVENVGWASQLNSGAVWVQFNDGSQLVVQPGVSSIIYTAPNGQITRHGENDKLPEYIKSKLQCLSSILMLFASSSSH</sequence>
<name>PLK4_XENTR</name>
<evidence type="ECO:0000250" key="1"/>
<evidence type="ECO:0000250" key="2">
    <source>
        <dbReference type="UniProtKB" id="O00444"/>
    </source>
</evidence>
<evidence type="ECO:0000250" key="3">
    <source>
        <dbReference type="UniProtKB" id="Q64702"/>
    </source>
</evidence>
<evidence type="ECO:0000255" key="4">
    <source>
        <dbReference type="PROSITE-ProRule" id="PRU00154"/>
    </source>
</evidence>
<evidence type="ECO:0000255" key="5">
    <source>
        <dbReference type="PROSITE-ProRule" id="PRU00159"/>
    </source>
</evidence>
<evidence type="ECO:0000255" key="6">
    <source>
        <dbReference type="PROSITE-ProRule" id="PRU01328"/>
    </source>
</evidence>
<evidence type="ECO:0000255" key="7">
    <source>
        <dbReference type="PROSITE-ProRule" id="PRU01329"/>
    </source>
</evidence>
<evidence type="ECO:0000256" key="8">
    <source>
        <dbReference type="SAM" id="MobiDB-lite"/>
    </source>
</evidence>
<proteinExistence type="evidence at transcript level"/>
<accession>B3DL84</accession>
<reference key="1">
    <citation type="submission" date="2008-06" db="EMBL/GenBank/DDBJ databases">
        <authorList>
            <consortium name="NIH - Xenopus Gene Collection (XGC) project"/>
        </authorList>
    </citation>
    <scope>NUCLEOTIDE SEQUENCE [LARGE SCALE MRNA]</scope>
    <source>
        <tissue>Embryo</tissue>
    </source>
</reference>
<gene>
    <name evidence="2" type="primary">plk4</name>
    <name type="synonym">sak</name>
</gene>
<protein>
    <recommendedName>
        <fullName evidence="2">Serine/threonine-protein kinase PLK4</fullName>
        <ecNumber evidence="2">2.7.11.21</ecNumber>
    </recommendedName>
    <alternativeName>
        <fullName>Polo-like kinase 4</fullName>
        <shortName>PLK-4</shortName>
    </alternativeName>
    <alternativeName>
        <fullName>Serine/threonine-protein kinase Sak</fullName>
    </alternativeName>
</protein>
<dbReference type="EC" id="2.7.11.21" evidence="2"/>
<dbReference type="EMBL" id="BC167348">
    <property type="protein sequence ID" value="AAI67348.1"/>
    <property type="molecule type" value="mRNA"/>
</dbReference>
<dbReference type="RefSeq" id="NP_001122128.1">
    <property type="nucleotide sequence ID" value="NM_001128656.1"/>
</dbReference>
<dbReference type="SMR" id="B3DL84"/>
<dbReference type="FunCoup" id="B3DL84">
    <property type="interactions" value="1718"/>
</dbReference>
<dbReference type="STRING" id="8364.ENSXETP00000012645"/>
<dbReference type="PaxDb" id="8364-ENSXETP00000061249"/>
<dbReference type="GeneID" id="100038180"/>
<dbReference type="KEGG" id="xtr:100038180"/>
<dbReference type="AGR" id="Xenbase:XB-GENE-493608"/>
<dbReference type="CTD" id="10733"/>
<dbReference type="Xenbase" id="XB-GENE-493608">
    <property type="gene designation" value="plk4"/>
</dbReference>
<dbReference type="eggNOG" id="KOG0575">
    <property type="taxonomic scope" value="Eukaryota"/>
</dbReference>
<dbReference type="InParanoid" id="B3DL84"/>
<dbReference type="OrthoDB" id="10004143at2759"/>
<dbReference type="Reactome" id="R-XTR-2565942">
    <property type="pathway name" value="Regulation of PLK1 Activity at G2/M Transition"/>
</dbReference>
<dbReference type="Reactome" id="R-XTR-380259">
    <property type="pathway name" value="Loss of Nlp from mitotic centrosomes"/>
</dbReference>
<dbReference type="Reactome" id="R-XTR-380270">
    <property type="pathway name" value="Recruitment of mitotic centrosome proteins and complexes"/>
</dbReference>
<dbReference type="Reactome" id="R-XTR-380320">
    <property type="pathway name" value="Recruitment of NuMA to mitotic centrosomes"/>
</dbReference>
<dbReference type="Reactome" id="R-XTR-5620912">
    <property type="pathway name" value="Anchoring of the basal body to the plasma membrane"/>
</dbReference>
<dbReference type="Reactome" id="R-XTR-8854518">
    <property type="pathway name" value="AURKA Activation by TPX2"/>
</dbReference>
<dbReference type="CD-CODE" id="09A0EAB5">
    <property type="entry name" value="Centrosome"/>
</dbReference>
<dbReference type="Proteomes" id="UP000008143">
    <property type="component" value="Chromosome 1"/>
</dbReference>
<dbReference type="GO" id="GO:0005814">
    <property type="term" value="C:centriole"/>
    <property type="evidence" value="ECO:0000250"/>
    <property type="project" value="UniProtKB"/>
</dbReference>
<dbReference type="GO" id="GO:0005813">
    <property type="term" value="C:centrosome"/>
    <property type="evidence" value="ECO:0000250"/>
    <property type="project" value="UniProtKB"/>
</dbReference>
<dbReference type="GO" id="GO:0005737">
    <property type="term" value="C:cytoplasm"/>
    <property type="evidence" value="ECO:0007669"/>
    <property type="project" value="UniProtKB-KW"/>
</dbReference>
<dbReference type="GO" id="GO:0098536">
    <property type="term" value="C:deuterosome"/>
    <property type="evidence" value="ECO:0000250"/>
    <property type="project" value="UniProtKB"/>
</dbReference>
<dbReference type="GO" id="GO:0005730">
    <property type="term" value="C:nucleolus"/>
    <property type="evidence" value="ECO:0000250"/>
    <property type="project" value="UniProtKB"/>
</dbReference>
<dbReference type="GO" id="GO:0005524">
    <property type="term" value="F:ATP binding"/>
    <property type="evidence" value="ECO:0007669"/>
    <property type="project" value="UniProtKB-KW"/>
</dbReference>
<dbReference type="GO" id="GO:0106310">
    <property type="term" value="F:protein serine kinase activity"/>
    <property type="evidence" value="ECO:0007669"/>
    <property type="project" value="RHEA"/>
</dbReference>
<dbReference type="GO" id="GO:0004674">
    <property type="term" value="F:protein serine/threonine kinase activity"/>
    <property type="evidence" value="ECO:0000250"/>
    <property type="project" value="UniProtKB"/>
</dbReference>
<dbReference type="GO" id="GO:0007099">
    <property type="term" value="P:centriole replication"/>
    <property type="evidence" value="ECO:0000250"/>
    <property type="project" value="UniProtKB"/>
</dbReference>
<dbReference type="GO" id="GO:0098535">
    <property type="term" value="P:de novo centriole assembly involved in multi-ciliated epithelial cell differentiation"/>
    <property type="evidence" value="ECO:0000250"/>
    <property type="project" value="UniProtKB"/>
</dbReference>
<dbReference type="GO" id="GO:0046601">
    <property type="term" value="P:positive regulation of centriole replication"/>
    <property type="evidence" value="ECO:0000250"/>
    <property type="project" value="UniProtKB"/>
</dbReference>
<dbReference type="CDD" id="cd13114">
    <property type="entry name" value="POLO_box_Plk4_1"/>
    <property type="match status" value="1"/>
</dbReference>
<dbReference type="CDD" id="cd13115">
    <property type="entry name" value="POLO_box_Plk4_2"/>
    <property type="match status" value="1"/>
</dbReference>
<dbReference type="CDD" id="cd13116">
    <property type="entry name" value="POLO_box_Plk4_3"/>
    <property type="match status" value="1"/>
</dbReference>
<dbReference type="CDD" id="cd14186">
    <property type="entry name" value="STKc_PLK4"/>
    <property type="match status" value="1"/>
</dbReference>
<dbReference type="FunFam" id="3.30.200.20:FF:000221">
    <property type="entry name" value="Putative serine/threonine-protein kinase PLK4"/>
    <property type="match status" value="1"/>
</dbReference>
<dbReference type="FunFam" id="1.10.510.10:FF:000576">
    <property type="entry name" value="Serine/threonine-protein kinase PLK4"/>
    <property type="match status" value="1"/>
</dbReference>
<dbReference type="FunFam" id="2.40.50.930:FF:000001">
    <property type="entry name" value="Serine/threonine-protein kinase PLK4"/>
    <property type="match status" value="1"/>
</dbReference>
<dbReference type="FunFam" id="3.30.1120.130:FF:000001">
    <property type="entry name" value="serine/threonine-protein kinase PLK4 isoform X1"/>
    <property type="match status" value="1"/>
</dbReference>
<dbReference type="FunFam" id="3.30.1120.120:FF:000001">
    <property type="entry name" value="serine/threonine-protein kinase PLK4 isoform X2"/>
    <property type="match status" value="1"/>
</dbReference>
<dbReference type="Gene3D" id="2.40.50.930">
    <property type="match status" value="1"/>
</dbReference>
<dbReference type="Gene3D" id="3.30.1120.120">
    <property type="match status" value="1"/>
</dbReference>
<dbReference type="Gene3D" id="3.30.1120.130">
    <property type="match status" value="1"/>
</dbReference>
<dbReference type="Gene3D" id="3.30.200.20">
    <property type="entry name" value="Phosphorylase Kinase, domain 1"/>
    <property type="match status" value="1"/>
</dbReference>
<dbReference type="Gene3D" id="1.10.510.10">
    <property type="entry name" value="Transferase(Phosphotransferase) domain 1"/>
    <property type="match status" value="1"/>
</dbReference>
<dbReference type="InterPro" id="IPR011009">
    <property type="entry name" value="Kinase-like_dom_sf"/>
</dbReference>
<dbReference type="InterPro" id="IPR047108">
    <property type="entry name" value="Plk4-like_POLO_box_2_sf"/>
</dbReference>
<dbReference type="InterPro" id="IPR000959">
    <property type="entry name" value="POLO_box_dom"/>
</dbReference>
<dbReference type="InterPro" id="IPR033699">
    <property type="entry name" value="POLO_box_Plk4_1"/>
</dbReference>
<dbReference type="InterPro" id="IPR033698">
    <property type="entry name" value="POLO_box_Plk4_2"/>
</dbReference>
<dbReference type="InterPro" id="IPR033696">
    <property type="entry name" value="POLO_box_Plk4_C"/>
</dbReference>
<dbReference type="InterPro" id="IPR000719">
    <property type="entry name" value="Prot_kinase_dom"/>
</dbReference>
<dbReference type="InterPro" id="IPR017441">
    <property type="entry name" value="Protein_kinase_ATP_BS"/>
</dbReference>
<dbReference type="InterPro" id="IPR046437">
    <property type="entry name" value="Ser_Thr-PK_POLO_box_1_sf"/>
</dbReference>
<dbReference type="InterPro" id="IPR008266">
    <property type="entry name" value="Tyr_kinase_AS"/>
</dbReference>
<dbReference type="PANTHER" id="PTHR24345">
    <property type="entry name" value="SERINE/THREONINE-PROTEIN KINASE PLK"/>
    <property type="match status" value="1"/>
</dbReference>
<dbReference type="PANTHER" id="PTHR24345:SF89">
    <property type="entry name" value="SERINE_THREONINE-PROTEIN KINASE PLK4"/>
    <property type="match status" value="1"/>
</dbReference>
<dbReference type="Pfam" id="PF00069">
    <property type="entry name" value="Pkinase"/>
    <property type="match status" value="1"/>
</dbReference>
<dbReference type="Pfam" id="PF18190">
    <property type="entry name" value="Plk4_PB1"/>
    <property type="match status" value="1"/>
</dbReference>
<dbReference type="Pfam" id="PF18409">
    <property type="entry name" value="Plk4_PB2"/>
    <property type="match status" value="1"/>
</dbReference>
<dbReference type="SUPFAM" id="SSF82615">
    <property type="entry name" value="Polo-box domain"/>
    <property type="match status" value="1"/>
</dbReference>
<dbReference type="SUPFAM" id="SSF56112">
    <property type="entry name" value="Protein kinase-like (PK-like)"/>
    <property type="match status" value="1"/>
</dbReference>
<dbReference type="PROSITE" id="PS51984">
    <property type="entry name" value="CPB1"/>
    <property type="match status" value="1"/>
</dbReference>
<dbReference type="PROSITE" id="PS51985">
    <property type="entry name" value="CPB2"/>
    <property type="match status" value="1"/>
</dbReference>
<dbReference type="PROSITE" id="PS50078">
    <property type="entry name" value="POLO_BOX"/>
    <property type="match status" value="1"/>
</dbReference>
<dbReference type="PROSITE" id="PS00107">
    <property type="entry name" value="PROTEIN_KINASE_ATP"/>
    <property type="match status" value="1"/>
</dbReference>
<dbReference type="PROSITE" id="PS50011">
    <property type="entry name" value="PROTEIN_KINASE_DOM"/>
    <property type="match status" value="1"/>
</dbReference>
<feature type="chain" id="PRO_0000385284" description="Serine/threonine-protein kinase PLK4">
    <location>
        <begin position="1"/>
        <end position="946"/>
    </location>
</feature>
<feature type="domain" description="Protein kinase" evidence="5">
    <location>
        <begin position="12"/>
        <end position="265"/>
    </location>
</feature>
<feature type="domain" description="Cryptic POLO box 1 (CPB1)" evidence="6">
    <location>
        <begin position="566"/>
        <end position="679"/>
    </location>
</feature>
<feature type="domain" description="Cryptic POLO box 2 (CPB2)" evidence="7">
    <location>
        <begin position="680"/>
        <end position="792"/>
    </location>
</feature>
<feature type="domain" description="POLO box" evidence="4">
    <location>
        <begin position="864"/>
        <end position="942"/>
    </location>
</feature>
<feature type="region of interest" description="Disordered" evidence="8">
    <location>
        <begin position="330"/>
        <end position="395"/>
    </location>
</feature>
<feature type="region of interest" description="Disordered" evidence="8">
    <location>
        <begin position="789"/>
        <end position="828"/>
    </location>
</feature>
<feature type="compositionally biased region" description="Polar residues" evidence="8">
    <location>
        <begin position="378"/>
        <end position="394"/>
    </location>
</feature>
<feature type="compositionally biased region" description="Polar residues" evidence="8">
    <location>
        <begin position="809"/>
        <end position="828"/>
    </location>
</feature>
<feature type="active site" description="Proton acceptor" evidence="5">
    <location>
        <position position="136"/>
    </location>
</feature>
<feature type="binding site" evidence="5">
    <location>
        <begin position="18"/>
        <end position="26"/>
    </location>
    <ligand>
        <name>ATP</name>
        <dbReference type="ChEBI" id="CHEBI:30616"/>
    </ligand>
</feature>
<feature type="binding site" evidence="5">
    <location>
        <position position="41"/>
    </location>
    <ligand>
        <name>ATP</name>
        <dbReference type="ChEBI" id="CHEBI:30616"/>
    </ligand>
</feature>
<organism>
    <name type="scientific">Xenopus tropicalis</name>
    <name type="common">Western clawed frog</name>
    <name type="synonym">Silurana tropicalis</name>
    <dbReference type="NCBI Taxonomy" id="8364"/>
    <lineage>
        <taxon>Eukaryota</taxon>
        <taxon>Metazoa</taxon>
        <taxon>Chordata</taxon>
        <taxon>Craniata</taxon>
        <taxon>Vertebrata</taxon>
        <taxon>Euteleostomi</taxon>
        <taxon>Amphibia</taxon>
        <taxon>Batrachia</taxon>
        <taxon>Anura</taxon>
        <taxon>Pipoidea</taxon>
        <taxon>Pipidae</taxon>
        <taxon>Xenopodinae</taxon>
        <taxon>Xenopus</taxon>
        <taxon>Silurana</taxon>
    </lineage>
</organism>
<keyword id="KW-0067">ATP-binding</keyword>
<keyword id="KW-0963">Cytoplasm</keyword>
<keyword id="KW-0206">Cytoskeleton</keyword>
<keyword id="KW-0418">Kinase</keyword>
<keyword id="KW-0547">Nucleotide-binding</keyword>
<keyword id="KW-1185">Reference proteome</keyword>
<keyword id="KW-0723">Serine/threonine-protein kinase</keyword>
<keyword id="KW-0808">Transferase</keyword>
<keyword id="KW-0832">Ubl conjugation</keyword>
<comment type="function">
    <text evidence="2">Serine/threonine-protein kinase that plays a central role in centriole duplication. Able to trigger procentriole formation on the surface of the parental centriole cylinder, leading to the recruitment of centriole biogenesis proteins such as sass6, cpap, ccp110, cep135 and gamma-tubulin. When overexpressed, it is able to induce centrosome amplification through the simultaneous generation of multiple procentrioles adjoining each parental centriole during S phase. Its central role in centriole replication suggests a possible role in tumorigenesis, centrosome aberrations being frequently observed in tumors. Also involved in deuterosome-mediated centriole amplification in multiciliated that can generate more than 100 centrioles (By similarity).</text>
</comment>
<comment type="catalytic activity">
    <reaction>
        <text>L-seryl-[protein] + ATP = O-phospho-L-seryl-[protein] + ADP + H(+)</text>
        <dbReference type="Rhea" id="RHEA:17989"/>
        <dbReference type="Rhea" id="RHEA-COMP:9863"/>
        <dbReference type="Rhea" id="RHEA-COMP:11604"/>
        <dbReference type="ChEBI" id="CHEBI:15378"/>
        <dbReference type="ChEBI" id="CHEBI:29999"/>
        <dbReference type="ChEBI" id="CHEBI:30616"/>
        <dbReference type="ChEBI" id="CHEBI:83421"/>
        <dbReference type="ChEBI" id="CHEBI:456216"/>
        <dbReference type="EC" id="2.7.11.21"/>
    </reaction>
</comment>
<comment type="catalytic activity">
    <reaction>
        <text>L-threonyl-[protein] + ATP = O-phospho-L-threonyl-[protein] + ADP + H(+)</text>
        <dbReference type="Rhea" id="RHEA:46608"/>
        <dbReference type="Rhea" id="RHEA-COMP:11060"/>
        <dbReference type="Rhea" id="RHEA-COMP:11605"/>
        <dbReference type="ChEBI" id="CHEBI:15378"/>
        <dbReference type="ChEBI" id="CHEBI:30013"/>
        <dbReference type="ChEBI" id="CHEBI:30616"/>
        <dbReference type="ChEBI" id="CHEBI:61977"/>
        <dbReference type="ChEBI" id="CHEBI:456216"/>
        <dbReference type="EC" id="2.7.11.21"/>
    </reaction>
</comment>
<comment type="subunit">
    <text evidence="1 3">Homodimer.</text>
</comment>
<comment type="subcellular location">
    <subcellularLocation>
        <location evidence="2">Cytoplasm</location>
        <location evidence="2">Cytoskeleton</location>
        <location evidence="2">Microtubule organizing center</location>
        <location evidence="2">Centrosome</location>
        <location evidence="2">Centriole</location>
    </subcellularLocation>
    <subcellularLocation>
        <location evidence="2">Cytoplasm</location>
        <location evidence="2">Cytoskeleton</location>
        <location evidence="2">Microtubule organizing center</location>
        <location evidence="2">Centrosome</location>
    </subcellularLocation>
    <text evidence="1">Associates with centrioles throughout the cell cycle. Component of the deuterosome, a structure that promotes de novo centriole amplification in multiciliated cells that can generate more than 100 centrioles (By similarity).</text>
</comment>
<comment type="PTM">
    <text evidence="3">Ubiquitinated; leading to its degradation by the proteasome.</text>
</comment>
<comment type="similarity">
    <text evidence="5 6 7">Belongs to the protein kinase superfamily. Ser/Thr protein kinase family. CDC5/Polo subfamily.</text>
</comment>